<keyword id="KW-0002">3D-structure</keyword>
<keyword id="KW-1003">Cell membrane</keyword>
<keyword id="KW-0961">Cell wall biogenesis/degradation</keyword>
<keyword id="KW-0472">Membrane</keyword>
<keyword id="KW-1185">Reference proteome</keyword>
<keyword id="KW-0777">Teichoic acid biosynthesis</keyword>
<keyword id="KW-0808">Transferase</keyword>
<evidence type="ECO:0000269" key="1">
    <source>
    </source>
</evidence>
<evidence type="ECO:0000269" key="2">
    <source>
    </source>
</evidence>
<evidence type="ECO:0000305" key="3"/>
<evidence type="ECO:0000312" key="4">
    <source>
        <dbReference type="EMBL" id="ABD29398.1"/>
    </source>
</evidence>
<evidence type="ECO:0000312" key="5">
    <source>
        <dbReference type="Proteomes" id="UP000008816"/>
    </source>
</evidence>
<protein>
    <recommendedName>
        <fullName evidence="3">Teichoic acid ribitol-phosphate polymerase TarK</fullName>
        <ecNumber evidence="1 2">2.7.8.14</ecNumber>
    </recommendedName>
    <alternativeName>
        <fullName evidence="3">Poly(ribitol phosphate) polymerase TarK</fullName>
    </alternativeName>
    <alternativeName>
        <fullName evidence="3">Ribitol-phosphate polymerase TarK</fullName>
    </alternativeName>
    <alternativeName>
        <fullName evidence="3">Tar polymerase TarK</fullName>
    </alternativeName>
</protein>
<organism>
    <name type="scientific">Staphylococcus aureus (strain NCTC 8325 / PS 47)</name>
    <dbReference type="NCBI Taxonomy" id="93061"/>
    <lineage>
        <taxon>Bacteria</taxon>
        <taxon>Bacillati</taxon>
        <taxon>Bacillota</taxon>
        <taxon>Bacilli</taxon>
        <taxon>Bacillales</taxon>
        <taxon>Staphylococcaceae</taxon>
        <taxon>Staphylococcus</taxon>
    </lineage>
</organism>
<feature type="chain" id="PRO_0000438795" description="Teichoic acid ribitol-phosphate polymerase TarK">
    <location>
        <begin position="1"/>
        <end position="513"/>
    </location>
</feature>
<comment type="function">
    <text evidence="1 2">Can catalyze the polymerization of the main chain of the major teichoic acid by sequential transfer of ribitol phosphate units from CDP-ribitol to the second glycerol phosphate attached to the disaccharide linkage unit.</text>
</comment>
<comment type="catalytic activity">
    <reaction evidence="1 2">
        <text>4-O-[di(2R)-glycerylphospho]-N-acetyl-beta-D-mannosaminyl-(1-&gt;4)-N-acetyl-alpha-D-glucosaminyl di-trans,octa-cis-undecaprenyl diphosphate + n CDP-L-ribitol = 4-O-[(D-ribitylphospho)(n)-di{(2R)-glycerylphospho}]-N-acetyl-beta-D-mannosaminyl-(1-&gt;4)-N-acetyl-alpha-D-glucosaminyl di-trans,octa-cis-undecaprenyl diphosphate + n CMP + n H(+)</text>
        <dbReference type="Rhea" id="RHEA:13353"/>
        <dbReference type="Rhea" id="RHEA-COMP:12840"/>
        <dbReference type="ChEBI" id="CHEBI:15378"/>
        <dbReference type="ChEBI" id="CHEBI:57608"/>
        <dbReference type="ChEBI" id="CHEBI:60377"/>
        <dbReference type="ChEBI" id="CHEBI:133867"/>
        <dbReference type="ChEBI" id="CHEBI:133896"/>
        <dbReference type="EC" id="2.7.8.14"/>
    </reaction>
</comment>
<comment type="pathway">
    <text evidence="3">Cell wall biogenesis; poly(ribitol phosphate) teichoic acid biosynthesis.</text>
</comment>
<comment type="subcellular location">
    <subcellularLocation>
        <location evidence="3">Cell membrane</location>
        <topology evidence="3">Peripheral membrane protein</topology>
    </subcellularLocation>
</comment>
<comment type="similarity">
    <text evidence="3">Belongs to the CDP-glycerol glycerophosphotransferase family.</text>
</comment>
<name>TARK_STAA8</name>
<dbReference type="EC" id="2.7.8.14" evidence="1 2"/>
<dbReference type="EMBL" id="CP000253">
    <property type="protein sequence ID" value="ABD29398.1"/>
    <property type="molecule type" value="Genomic_DNA"/>
</dbReference>
<dbReference type="RefSeq" id="WP_011446981.1">
    <property type="nucleotide sequence ID" value="NC_007795.1"/>
</dbReference>
<dbReference type="RefSeq" id="YP_498818.1">
    <property type="nucleotide sequence ID" value="NC_007795.1"/>
</dbReference>
<dbReference type="PDB" id="8V34">
    <property type="method" value="X-ray"/>
    <property type="resolution" value="3.00 A"/>
    <property type="chains" value="A/B/C/D/E/F/G/H/I/J=1-121"/>
</dbReference>
<dbReference type="PDBsum" id="8V34"/>
<dbReference type="SMR" id="Q2G1C2"/>
<dbReference type="STRING" id="93061.SAOUHSC_00222"/>
<dbReference type="PaxDb" id="1280-SAXN108_0232"/>
<dbReference type="GeneID" id="3920298"/>
<dbReference type="KEGG" id="sao:SAOUHSC_00222"/>
<dbReference type="PATRIC" id="fig|93061.5.peg.204"/>
<dbReference type="eggNOG" id="COG1887">
    <property type="taxonomic scope" value="Bacteria"/>
</dbReference>
<dbReference type="HOGENOM" id="CLU_029598_3_1_9"/>
<dbReference type="OrthoDB" id="9811865at2"/>
<dbReference type="BRENDA" id="2.7.8.46">
    <property type="organism ID" value="3352"/>
</dbReference>
<dbReference type="BRENDA" id="2.7.8.47">
    <property type="organism ID" value="3352"/>
</dbReference>
<dbReference type="UniPathway" id="UPA00790"/>
<dbReference type="Proteomes" id="UP000008816">
    <property type="component" value="Chromosome"/>
</dbReference>
<dbReference type="GO" id="GO:0005886">
    <property type="term" value="C:plasma membrane"/>
    <property type="evidence" value="ECO:0007669"/>
    <property type="project" value="UniProtKB-SubCell"/>
</dbReference>
<dbReference type="GO" id="GO:0047355">
    <property type="term" value="F:CDP-glycerol glycerophosphotransferase activity"/>
    <property type="evidence" value="ECO:0007669"/>
    <property type="project" value="InterPro"/>
</dbReference>
<dbReference type="GO" id="GO:0047356">
    <property type="term" value="F:CDP-ribitol ribitolphosphotransferase activity"/>
    <property type="evidence" value="ECO:0007669"/>
    <property type="project" value="UniProtKB-EC"/>
</dbReference>
<dbReference type="GO" id="GO:0071555">
    <property type="term" value="P:cell wall organization"/>
    <property type="evidence" value="ECO:0007669"/>
    <property type="project" value="UniProtKB-KW"/>
</dbReference>
<dbReference type="GO" id="GO:0019350">
    <property type="term" value="P:teichoic acid biosynthetic process"/>
    <property type="evidence" value="ECO:0007669"/>
    <property type="project" value="UniProtKB-KW"/>
</dbReference>
<dbReference type="Gene3D" id="3.40.50.11820">
    <property type="match status" value="1"/>
</dbReference>
<dbReference type="Gene3D" id="3.40.50.12580">
    <property type="match status" value="1"/>
</dbReference>
<dbReference type="InterPro" id="IPR007554">
    <property type="entry name" value="Glycerophosphate_synth"/>
</dbReference>
<dbReference type="InterPro" id="IPR043148">
    <property type="entry name" value="TagF_C"/>
</dbReference>
<dbReference type="InterPro" id="IPR043149">
    <property type="entry name" value="TagF_N"/>
</dbReference>
<dbReference type="InterPro" id="IPR051612">
    <property type="entry name" value="Teichoic_Acid_Biosynth"/>
</dbReference>
<dbReference type="PANTHER" id="PTHR37316">
    <property type="entry name" value="TEICHOIC ACID GLYCEROL-PHOSPHATE PRIMASE"/>
    <property type="match status" value="1"/>
</dbReference>
<dbReference type="PANTHER" id="PTHR37316:SF2">
    <property type="entry name" value="TEICHOIC ACID RIBITOL-PHOSPHATE POLYMERASE TARK"/>
    <property type="match status" value="1"/>
</dbReference>
<dbReference type="Pfam" id="PF04464">
    <property type="entry name" value="Glyphos_transf"/>
    <property type="match status" value="1"/>
</dbReference>
<dbReference type="SUPFAM" id="SSF53756">
    <property type="entry name" value="UDP-Glycosyltransferase/glycogen phosphorylase"/>
    <property type="match status" value="1"/>
</dbReference>
<gene>
    <name type="primary">tarK</name>
    <name evidence="4" type="ordered locus">SAOUHSC_00222</name>
</gene>
<proteinExistence type="evidence at protein level"/>
<sequence>MKIDGNTFICRFNVAILDDGYYLPMDKYLFVYHDQLEYIGQLNPNIIDQAYAALNEEQIEEYNELTTQNGKVNYLLAYDAKVFRKGGVSQHTVYTITPEIASDVNEFVFDIEITLPQEKSGVIATSAHWLHKQGHKASFESRSFLFKAIFNITKLLHIKRSKTILFTSDSRPNLSGNFKYVYDELLRQKVDFDYDIKTVFKENITDRRKWRDKFRLPYLLGKADYIFVDDFHPLIYTVRFRPSQEIIQVWHAVGAFKTVGFSRTGKKGGPFIDSLNHRSYTKAYVSSETDIPFYAEAFGIREENVVPTGVPRTDVLFDEAYATQIKQEMEDELPIIKGKKVILFAPTFRGNGHGTAHYPFFKIDFERLARYCEKHNAVVLFKMHPFVKNRLNISREHRQYFIDVSDHREVNDILFVTDLLISDYSSLIYEYAVFKKPMIFYAFDLEDYITTRDFYEPFESFVPGKIVQSFDALMDALDNEDYEVEKVVPFLDKHFKYQDGRSSERLVKDLFRR</sequence>
<accession>Q2G1C2</accession>
<reference key="1">
    <citation type="book" date="2006" name="Gram positive pathogens, 2nd edition">
        <title>The Staphylococcus aureus NCTC 8325 genome.</title>
        <editorList>
            <person name="Fischetti V."/>
            <person name="Novick R."/>
            <person name="Ferretti J."/>
            <person name="Portnoy D."/>
            <person name="Rood J."/>
        </editorList>
        <authorList>
            <person name="Gillaspy A.F."/>
            <person name="Worrell V."/>
            <person name="Orvis J."/>
            <person name="Roe B.A."/>
            <person name="Dyer D.W."/>
            <person name="Iandolo J.J."/>
        </authorList>
    </citation>
    <scope>NUCLEOTIDE SEQUENCE [LARGE SCALE GENOMIC DNA]</scope>
    <source>
        <strain evidence="5">NCTC 8325 / PS 47</strain>
    </source>
</reference>
<reference key="2">
    <citation type="journal article" date="2008" name="J. Bacteriol.">
        <title>Duplication of teichoic acid biosynthetic genes in Staphylococcus aureus leads to functionally redundant poly(ribitol phosphate) polymerases.</title>
        <authorList>
            <person name="Pereira M.P."/>
            <person name="D'Elia M.A."/>
            <person name="Troczynska J."/>
            <person name="Brown E.D."/>
        </authorList>
    </citation>
    <scope>FUNCTION</scope>
    <scope>CATALYTIC ACTIVITY</scope>
    <source>
        <strain>RN4220 / SA178RI</strain>
    </source>
</reference>
<reference key="3">
    <citation type="journal article" date="2010" name="Chem. Biol.">
        <title>Staphylococcus aureus and Bacillus subtilis W23 make polyribitol wall teichoic acids using different enzymatic pathways.</title>
        <authorList>
            <person name="Brown S."/>
            <person name="Meredith T."/>
            <person name="Swoboda J."/>
            <person name="Walker S."/>
        </authorList>
    </citation>
    <scope>FUNCTION</scope>
    <scope>CATALYTIC ACTIVITY</scope>
</reference>